<accession>A6NGQ2</accession>
<accession>A6NIN5</accession>
<accession>A9UIB7</accession>
<gene>
    <name evidence="8 11" type="primary">OOEP</name>
    <name evidence="11" type="synonym">C6orf156</name>
    <name type="synonym">KHDC2</name>
    <name evidence="9" type="synonym">OEP19</name>
</gene>
<feature type="chain" id="PRO_0000328802" description="Oocyte-expressed protein homolog">
    <location>
        <begin position="1"/>
        <end position="149"/>
    </location>
</feature>
<feature type="domain" description="KH; atypical">
    <location>
        <begin position="49"/>
        <end position="110"/>
    </location>
</feature>
<feature type="region of interest" description="Disordered" evidence="2">
    <location>
        <begin position="1"/>
        <end position="22"/>
    </location>
</feature>
<feature type="sequence variant" id="VAR_042523" description="In dbSNP:rs2280286.">
    <original>A</original>
    <variation>T</variation>
    <location>
        <position position="18"/>
    </location>
</feature>
<feature type="sequence variant" id="VAR_088459" description="Found in female infertility with early embryonic arrest; uncertain significance; dbSNP:rs189355507." evidence="5">
    <original>R</original>
    <variation>G</variation>
    <location>
        <position position="37"/>
    </location>
</feature>
<feature type="sequence variant" id="VAR_088460" description="Found in female infertility with early embryonic arrest; uncertain significance; dbSNP:rs768361697." evidence="5">
    <original>R</original>
    <variation>P</variation>
    <location>
        <position position="37"/>
    </location>
</feature>
<feature type="sequence variant" id="VAR_042524" description="In dbSNP:rs496530." evidence="7">
    <original>V</original>
    <variation>A</variation>
    <location>
        <position position="92"/>
    </location>
</feature>
<feature type="mutagenesis site" description="Impaired formation of the subcortical maternal complex (SCMC)." evidence="6">
    <original>MLLCLAWF</original>
    <variation>DLLDDAWD</variation>
    <location>
        <begin position="109"/>
        <end position="116"/>
    </location>
</feature>
<feature type="strand" evidence="14">
    <location>
        <begin position="34"/>
        <end position="36"/>
    </location>
</feature>
<feature type="strand" evidence="14">
    <location>
        <begin position="39"/>
        <end position="41"/>
    </location>
</feature>
<feature type="helix" evidence="14">
    <location>
        <begin position="44"/>
        <end position="46"/>
    </location>
</feature>
<feature type="strand" evidence="14">
    <location>
        <begin position="50"/>
        <end position="55"/>
    </location>
</feature>
<feature type="helix" evidence="14">
    <location>
        <begin position="56"/>
        <end position="63"/>
    </location>
</feature>
<feature type="turn" evidence="14">
    <location>
        <begin position="64"/>
        <end position="66"/>
    </location>
</feature>
<feature type="helix" evidence="14">
    <location>
        <begin position="70"/>
        <end position="77"/>
    </location>
</feature>
<feature type="strand" evidence="14">
    <location>
        <begin position="80"/>
        <end position="85"/>
    </location>
</feature>
<feature type="strand" evidence="14">
    <location>
        <begin position="89"/>
        <end position="98"/>
    </location>
</feature>
<feature type="helix" evidence="14">
    <location>
        <begin position="100"/>
        <end position="123"/>
    </location>
</feature>
<dbReference type="EMBL" id="EU290647">
    <property type="protein sequence ID" value="ABX84389.1"/>
    <property type="molecule type" value="mRNA"/>
</dbReference>
<dbReference type="EMBL" id="AC019205">
    <property type="status" value="NOT_ANNOTATED_CDS"/>
    <property type="molecule type" value="Genomic_DNA"/>
</dbReference>
<dbReference type="CCDS" id="CCDS47451.1"/>
<dbReference type="RefSeq" id="NP_001073976.1">
    <property type="nucleotide sequence ID" value="NM_001080507.3"/>
</dbReference>
<dbReference type="PDB" id="8X7V">
    <property type="method" value="EM"/>
    <property type="resolution" value="3.01 A"/>
    <property type="chains" value="B=1-149"/>
</dbReference>
<dbReference type="PDB" id="8X7W">
    <property type="method" value="EM"/>
    <property type="resolution" value="3.36 A"/>
    <property type="chains" value="B/E=1-149"/>
</dbReference>
<dbReference type="PDBsum" id="8X7V"/>
<dbReference type="PDBsum" id="8X7W"/>
<dbReference type="EMDB" id="EMD-38128"/>
<dbReference type="EMDB" id="EMD-38129"/>
<dbReference type="SMR" id="A6NGQ2"/>
<dbReference type="BioGRID" id="137219">
    <property type="interactions" value="11"/>
</dbReference>
<dbReference type="ComplexPortal" id="CPX-2210">
    <property type="entry name" value="Subcortical maternal complex"/>
</dbReference>
<dbReference type="CORUM" id="A6NGQ2"/>
<dbReference type="FunCoup" id="A6NGQ2">
    <property type="interactions" value="14"/>
</dbReference>
<dbReference type="IntAct" id="A6NGQ2">
    <property type="interactions" value="13"/>
</dbReference>
<dbReference type="STRING" id="9606.ENSP00000359384"/>
<dbReference type="BioMuta" id="OOEP"/>
<dbReference type="jPOST" id="A6NGQ2"/>
<dbReference type="MassIVE" id="A6NGQ2"/>
<dbReference type="PaxDb" id="9606-ENSP00000359384"/>
<dbReference type="PeptideAtlas" id="A6NGQ2"/>
<dbReference type="Antibodypedia" id="65863">
    <property type="antibodies" value="9 antibodies from 7 providers"/>
</dbReference>
<dbReference type="DNASU" id="441161"/>
<dbReference type="Ensembl" id="ENST00000370359.6">
    <property type="protein sequence ID" value="ENSP00000359384.5"/>
    <property type="gene ID" value="ENSG00000203907.10"/>
</dbReference>
<dbReference type="GeneID" id="441161"/>
<dbReference type="KEGG" id="hsa:441161"/>
<dbReference type="MANE-Select" id="ENST00000370359.6">
    <property type="protein sequence ID" value="ENSP00000359384.5"/>
    <property type="RefSeq nucleotide sequence ID" value="NM_001080507.3"/>
    <property type="RefSeq protein sequence ID" value="NP_001073976.1"/>
</dbReference>
<dbReference type="UCSC" id="uc003pgu.5">
    <property type="organism name" value="human"/>
</dbReference>
<dbReference type="AGR" id="HGNC:21382"/>
<dbReference type="CTD" id="441161"/>
<dbReference type="DisGeNET" id="441161"/>
<dbReference type="GeneCards" id="OOEP"/>
<dbReference type="HGNC" id="HGNC:21382">
    <property type="gene designation" value="OOEP"/>
</dbReference>
<dbReference type="HPA" id="ENSG00000203907">
    <property type="expression patterns" value="Tissue enriched (testis)"/>
</dbReference>
<dbReference type="MIM" id="611689">
    <property type="type" value="gene"/>
</dbReference>
<dbReference type="neXtProt" id="NX_A6NGQ2"/>
<dbReference type="OpenTargets" id="ENSG00000203907"/>
<dbReference type="PharmGKB" id="PA162398414"/>
<dbReference type="VEuPathDB" id="HostDB:ENSG00000203907"/>
<dbReference type="eggNOG" id="ENOG502RU0M">
    <property type="taxonomic scope" value="Eukaryota"/>
</dbReference>
<dbReference type="GeneTree" id="ENSGT00940000162097"/>
<dbReference type="HOGENOM" id="CLU_146793_0_0_1"/>
<dbReference type="InParanoid" id="A6NGQ2"/>
<dbReference type="OMA" id="RVRPWWF"/>
<dbReference type="OrthoDB" id="9533079at2759"/>
<dbReference type="PAN-GO" id="A6NGQ2">
    <property type="GO annotations" value="5 GO annotations based on evolutionary models"/>
</dbReference>
<dbReference type="PhylomeDB" id="A6NGQ2"/>
<dbReference type="TreeFam" id="TF338690"/>
<dbReference type="PathwayCommons" id="A6NGQ2"/>
<dbReference type="SignaLink" id="A6NGQ2"/>
<dbReference type="BioGRID-ORCS" id="441161">
    <property type="hits" value="11 hits in 1139 CRISPR screens"/>
</dbReference>
<dbReference type="ChiTaRS" id="OOEP">
    <property type="organism name" value="human"/>
</dbReference>
<dbReference type="GenomeRNAi" id="441161"/>
<dbReference type="Pharos" id="A6NGQ2">
    <property type="development level" value="Tdark"/>
</dbReference>
<dbReference type="PRO" id="PR:A6NGQ2"/>
<dbReference type="Proteomes" id="UP000005640">
    <property type="component" value="Chromosome 6"/>
</dbReference>
<dbReference type="RNAct" id="A6NGQ2">
    <property type="molecule type" value="protein"/>
</dbReference>
<dbReference type="Bgee" id="ENSG00000203907">
    <property type="expression patterns" value="Expressed in oocyte and 95 other cell types or tissues"/>
</dbReference>
<dbReference type="ExpressionAtlas" id="A6NGQ2">
    <property type="expression patterns" value="baseline and differential"/>
</dbReference>
<dbReference type="GO" id="GO:0005938">
    <property type="term" value="C:cell cortex"/>
    <property type="evidence" value="ECO:0000250"/>
    <property type="project" value="UniProtKB"/>
</dbReference>
<dbReference type="GO" id="GO:0005737">
    <property type="term" value="C:cytoplasm"/>
    <property type="evidence" value="ECO:0000314"/>
    <property type="project" value="UniProtKB"/>
</dbReference>
<dbReference type="GO" id="GO:0140095">
    <property type="term" value="C:cytoplasmic lattice"/>
    <property type="evidence" value="ECO:0000250"/>
    <property type="project" value="UniProtKB"/>
</dbReference>
<dbReference type="GO" id="GO:0005634">
    <property type="term" value="C:nucleus"/>
    <property type="evidence" value="ECO:0000314"/>
    <property type="project" value="UniProtKB"/>
</dbReference>
<dbReference type="GO" id="GO:0032991">
    <property type="term" value="C:protein-containing complex"/>
    <property type="evidence" value="ECO:0000314"/>
    <property type="project" value="UniProtKB"/>
</dbReference>
<dbReference type="GO" id="GO:0106333">
    <property type="term" value="C:subcortical maternal complex"/>
    <property type="evidence" value="ECO:0000314"/>
    <property type="project" value="UniProtKB"/>
</dbReference>
<dbReference type="GO" id="GO:0003723">
    <property type="term" value="F:RNA binding"/>
    <property type="evidence" value="ECO:0000318"/>
    <property type="project" value="GO_Central"/>
</dbReference>
<dbReference type="GO" id="GO:0140094">
    <property type="term" value="F:structural constituent of cytoplasmic lattice"/>
    <property type="evidence" value="ECO:0000250"/>
    <property type="project" value="UniProtKB"/>
</dbReference>
<dbReference type="GO" id="GO:0007015">
    <property type="term" value="P:actin filament organization"/>
    <property type="evidence" value="ECO:0000250"/>
    <property type="project" value="UniProtKB"/>
</dbReference>
<dbReference type="GO" id="GO:0009880">
    <property type="term" value="P:embryonic pattern specification"/>
    <property type="evidence" value="ECO:0000318"/>
    <property type="project" value="GO_Central"/>
</dbReference>
<dbReference type="GO" id="GO:0051293">
    <property type="term" value="P:establishment of spindle localization"/>
    <property type="evidence" value="ECO:0000250"/>
    <property type="project" value="UniProtKB"/>
</dbReference>
<dbReference type="GO" id="GO:0035088">
    <property type="term" value="P:establishment or maintenance of apical/basal cell polarity"/>
    <property type="evidence" value="ECO:0000318"/>
    <property type="project" value="GO_Central"/>
</dbReference>
<dbReference type="GO" id="GO:2000781">
    <property type="term" value="P:positive regulation of double-strand break repair"/>
    <property type="evidence" value="ECO:0000250"/>
    <property type="project" value="UniProtKB"/>
</dbReference>
<dbReference type="GO" id="GO:1905168">
    <property type="term" value="P:positive regulation of double-strand break repair via homologous recombination"/>
    <property type="evidence" value="ECO:0000250"/>
    <property type="project" value="UniProtKB"/>
</dbReference>
<dbReference type="GO" id="GO:0045836">
    <property type="term" value="P:positive regulation of meiotic nuclear division"/>
    <property type="evidence" value="ECO:0000250"/>
    <property type="project" value="UniProtKB"/>
</dbReference>
<dbReference type="GO" id="GO:0140089">
    <property type="term" value="P:protein storage"/>
    <property type="evidence" value="ECO:0000250"/>
    <property type="project" value="UniProtKB"/>
</dbReference>
<dbReference type="GO" id="GO:0051302">
    <property type="term" value="P:regulation of cell division"/>
    <property type="evidence" value="ECO:0000250"/>
    <property type="project" value="UniProtKB"/>
</dbReference>
<dbReference type="GO" id="GO:0070201">
    <property type="term" value="P:regulation of establishment of protein localization"/>
    <property type="evidence" value="ECO:0000250"/>
    <property type="project" value="UniProtKB"/>
</dbReference>
<dbReference type="GO" id="GO:0032880">
    <property type="term" value="P:regulation of protein localization"/>
    <property type="evidence" value="ECO:0000250"/>
    <property type="project" value="UniProtKB"/>
</dbReference>
<dbReference type="GO" id="GO:0031297">
    <property type="term" value="P:replication fork processing"/>
    <property type="evidence" value="ECO:0000250"/>
    <property type="project" value="UniProtKB"/>
</dbReference>
<dbReference type="CDD" id="cd12795">
    <property type="entry name" value="FILIA_N_like"/>
    <property type="match status" value="1"/>
</dbReference>
<dbReference type="FunFam" id="3.30.1370.10:FF:000086">
    <property type="entry name" value="Oocyte-expressed protein homolog"/>
    <property type="match status" value="1"/>
</dbReference>
<dbReference type="Gene3D" id="3.30.1370.10">
    <property type="entry name" value="K Homology domain, type 1"/>
    <property type="match status" value="1"/>
</dbReference>
<dbReference type="InterPro" id="IPR036612">
    <property type="entry name" value="KH_dom_type_1_sf"/>
</dbReference>
<dbReference type="InterPro" id="IPR051778">
    <property type="entry name" value="KHDC1"/>
</dbReference>
<dbReference type="InterPro" id="IPR031952">
    <property type="entry name" value="MOEP19_KH-like"/>
</dbReference>
<dbReference type="PANTHER" id="PTHR19447:SF14">
    <property type="entry name" value="OOCYTE-EXPRESSED PROTEIN HOMOLOG"/>
    <property type="match status" value="1"/>
</dbReference>
<dbReference type="PANTHER" id="PTHR19447">
    <property type="entry name" value="OOCYTE-EXPRESSED PROTEIN HOMOLOG-RELATED"/>
    <property type="match status" value="1"/>
</dbReference>
<dbReference type="Pfam" id="PF16005">
    <property type="entry name" value="MOEP19"/>
    <property type="match status" value="1"/>
</dbReference>
<protein>
    <recommendedName>
        <fullName>Oocyte-expressed protein homolog</fullName>
    </recommendedName>
    <alternativeName>
        <fullName>KH homology domain-containing protein 2</fullName>
    </alternativeName>
    <alternativeName>
        <fullName evidence="9">Oocyte- and embryo-specific protein 19</fullName>
        <shortName evidence="9">hOEP19</shortName>
    </alternativeName>
</protein>
<proteinExistence type="evidence at protein level"/>
<evidence type="ECO:0000250" key="1">
    <source>
        <dbReference type="UniProtKB" id="Q9CWE6"/>
    </source>
</evidence>
<evidence type="ECO:0000256" key="2">
    <source>
        <dbReference type="SAM" id="MobiDB-lite"/>
    </source>
</evidence>
<evidence type="ECO:0000269" key="3">
    <source>
    </source>
</evidence>
<evidence type="ECO:0000269" key="4">
    <source>
    </source>
</evidence>
<evidence type="ECO:0000269" key="5">
    <source>
    </source>
</evidence>
<evidence type="ECO:0000269" key="6">
    <source>
    </source>
</evidence>
<evidence type="ECO:0000269" key="7">
    <source ref="1"/>
</evidence>
<evidence type="ECO:0000303" key="8">
    <source>
    </source>
</evidence>
<evidence type="ECO:0000303" key="9">
    <source ref="1"/>
</evidence>
<evidence type="ECO:0000305" key="10"/>
<evidence type="ECO:0000312" key="11">
    <source>
        <dbReference type="HGNC" id="HGNC:21382"/>
    </source>
</evidence>
<evidence type="ECO:0007744" key="12">
    <source>
        <dbReference type="PDB" id="8X7V"/>
    </source>
</evidence>
<evidence type="ECO:0007744" key="13">
    <source>
        <dbReference type="PDB" id="8X7W"/>
    </source>
</evidence>
<evidence type="ECO:0007829" key="14">
    <source>
        <dbReference type="PDB" id="8X7V"/>
    </source>
</evidence>
<organism>
    <name type="scientific">Homo sapiens</name>
    <name type="common">Human</name>
    <dbReference type="NCBI Taxonomy" id="9606"/>
    <lineage>
        <taxon>Eukaryota</taxon>
        <taxon>Metazoa</taxon>
        <taxon>Chordata</taxon>
        <taxon>Craniata</taxon>
        <taxon>Vertebrata</taxon>
        <taxon>Euteleostomi</taxon>
        <taxon>Mammalia</taxon>
        <taxon>Eutheria</taxon>
        <taxon>Euarchontoglires</taxon>
        <taxon>Primates</taxon>
        <taxon>Haplorrhini</taxon>
        <taxon>Catarrhini</taxon>
        <taxon>Hominidae</taxon>
        <taxon>Homo</taxon>
    </lineage>
</organism>
<sequence>MVDDAGAAESQRGKQTPAHSLEQLRRLPLPPPQIRIRPWWFPVQELRDPLVFYLEAWLADELFGPDRAIIPEMEWTSQALLTVDIVDSGNLVEITVFGRPRVQNRVKSMLLCLAWFHREHRARAEKMKHLEKNLKAHASDPHSPQDPVA</sequence>
<name>OOEP_HUMAN</name>
<reference key="1">
    <citation type="submission" date="2007-12" db="EMBL/GenBank/DDBJ databases">
        <title>Human oocyte and embryo protein (HOEP19).</title>
        <authorList>
            <person name="Chertihin O."/>
            <person name="Herr J.C."/>
        </authorList>
    </citation>
    <scope>NUCLEOTIDE SEQUENCE [MRNA]</scope>
    <scope>VARIANT ALA-92</scope>
</reference>
<reference key="2">
    <citation type="journal article" date="2003" name="Nature">
        <title>The DNA sequence and analysis of human chromosome 6.</title>
        <authorList>
            <person name="Mungall A.J."/>
            <person name="Palmer S.A."/>
            <person name="Sims S.K."/>
            <person name="Edwards C.A."/>
            <person name="Ashurst J.L."/>
            <person name="Wilming L."/>
            <person name="Jones M.C."/>
            <person name="Horton R."/>
            <person name="Hunt S.E."/>
            <person name="Scott C.E."/>
            <person name="Gilbert J.G.R."/>
            <person name="Clamp M.E."/>
            <person name="Bethel G."/>
            <person name="Milne S."/>
            <person name="Ainscough R."/>
            <person name="Almeida J.P."/>
            <person name="Ambrose K.D."/>
            <person name="Andrews T.D."/>
            <person name="Ashwell R.I.S."/>
            <person name="Babbage A.K."/>
            <person name="Bagguley C.L."/>
            <person name="Bailey J."/>
            <person name="Banerjee R."/>
            <person name="Barker D.J."/>
            <person name="Barlow K.F."/>
            <person name="Bates K."/>
            <person name="Beare D.M."/>
            <person name="Beasley H."/>
            <person name="Beasley O."/>
            <person name="Bird C.P."/>
            <person name="Blakey S.E."/>
            <person name="Bray-Allen S."/>
            <person name="Brook J."/>
            <person name="Brown A.J."/>
            <person name="Brown J.Y."/>
            <person name="Burford D.C."/>
            <person name="Burrill W."/>
            <person name="Burton J."/>
            <person name="Carder C."/>
            <person name="Carter N.P."/>
            <person name="Chapman J.C."/>
            <person name="Clark S.Y."/>
            <person name="Clark G."/>
            <person name="Clee C.M."/>
            <person name="Clegg S."/>
            <person name="Cobley V."/>
            <person name="Collier R.E."/>
            <person name="Collins J.E."/>
            <person name="Colman L.K."/>
            <person name="Corby N.R."/>
            <person name="Coville G.J."/>
            <person name="Culley K.M."/>
            <person name="Dhami P."/>
            <person name="Davies J."/>
            <person name="Dunn M."/>
            <person name="Earthrowl M.E."/>
            <person name="Ellington A.E."/>
            <person name="Evans K.A."/>
            <person name="Faulkner L."/>
            <person name="Francis M.D."/>
            <person name="Frankish A."/>
            <person name="Frankland J."/>
            <person name="French L."/>
            <person name="Garner P."/>
            <person name="Garnett J."/>
            <person name="Ghori M.J."/>
            <person name="Gilby L.M."/>
            <person name="Gillson C.J."/>
            <person name="Glithero R.J."/>
            <person name="Grafham D.V."/>
            <person name="Grant M."/>
            <person name="Gribble S."/>
            <person name="Griffiths C."/>
            <person name="Griffiths M.N.D."/>
            <person name="Hall R."/>
            <person name="Halls K.S."/>
            <person name="Hammond S."/>
            <person name="Harley J.L."/>
            <person name="Hart E.A."/>
            <person name="Heath P.D."/>
            <person name="Heathcott R."/>
            <person name="Holmes S.J."/>
            <person name="Howden P.J."/>
            <person name="Howe K.L."/>
            <person name="Howell G.R."/>
            <person name="Huckle E."/>
            <person name="Humphray S.J."/>
            <person name="Humphries M.D."/>
            <person name="Hunt A.R."/>
            <person name="Johnson C.M."/>
            <person name="Joy A.A."/>
            <person name="Kay M."/>
            <person name="Keenan S.J."/>
            <person name="Kimberley A.M."/>
            <person name="King A."/>
            <person name="Laird G.K."/>
            <person name="Langford C."/>
            <person name="Lawlor S."/>
            <person name="Leongamornlert D.A."/>
            <person name="Leversha M."/>
            <person name="Lloyd C.R."/>
            <person name="Lloyd D.M."/>
            <person name="Loveland J.E."/>
            <person name="Lovell J."/>
            <person name="Martin S."/>
            <person name="Mashreghi-Mohammadi M."/>
            <person name="Maslen G.L."/>
            <person name="Matthews L."/>
            <person name="McCann O.T."/>
            <person name="McLaren S.J."/>
            <person name="McLay K."/>
            <person name="McMurray A."/>
            <person name="Moore M.J.F."/>
            <person name="Mullikin J.C."/>
            <person name="Niblett D."/>
            <person name="Nickerson T."/>
            <person name="Novik K.L."/>
            <person name="Oliver K."/>
            <person name="Overton-Larty E.K."/>
            <person name="Parker A."/>
            <person name="Patel R."/>
            <person name="Pearce A.V."/>
            <person name="Peck A.I."/>
            <person name="Phillimore B.J.C.T."/>
            <person name="Phillips S."/>
            <person name="Plumb R.W."/>
            <person name="Porter K.M."/>
            <person name="Ramsey Y."/>
            <person name="Ranby S.A."/>
            <person name="Rice C.M."/>
            <person name="Ross M.T."/>
            <person name="Searle S.M."/>
            <person name="Sehra H.K."/>
            <person name="Sheridan E."/>
            <person name="Skuce C.D."/>
            <person name="Smith S."/>
            <person name="Smith M."/>
            <person name="Spraggon L."/>
            <person name="Squares S.L."/>
            <person name="Steward C.A."/>
            <person name="Sycamore N."/>
            <person name="Tamlyn-Hall G."/>
            <person name="Tester J."/>
            <person name="Theaker A.J."/>
            <person name="Thomas D.W."/>
            <person name="Thorpe A."/>
            <person name="Tracey A."/>
            <person name="Tromans A."/>
            <person name="Tubby B."/>
            <person name="Wall M."/>
            <person name="Wallis J.M."/>
            <person name="West A.P."/>
            <person name="White S.S."/>
            <person name="Whitehead S.L."/>
            <person name="Whittaker H."/>
            <person name="Wild A."/>
            <person name="Willey D.J."/>
            <person name="Wilmer T.E."/>
            <person name="Wood J.M."/>
            <person name="Wray P.W."/>
            <person name="Wyatt J.C."/>
            <person name="Young L."/>
            <person name="Younger R.M."/>
            <person name="Bentley D.R."/>
            <person name="Coulson A."/>
            <person name="Durbin R.M."/>
            <person name="Hubbard T."/>
            <person name="Sulston J.E."/>
            <person name="Dunham I."/>
            <person name="Rogers J."/>
            <person name="Beck S."/>
        </authorList>
    </citation>
    <scope>NUCLEOTIDE SEQUENCE [LARGE SCALE GENOMIC DNA]</scope>
</reference>
<reference key="3">
    <citation type="journal article" date="2007" name="Genomics">
        <title>Atypical structure and phylogenomic evolution of the new eutherian oocyte- and embryo-expressed KHDC1/DPPA5/ECAT1/OOEP gene family.</title>
        <authorList>
            <person name="Pierre A."/>
            <person name="Gautier M."/>
            <person name="Callebaut I."/>
            <person name="Bontoux M."/>
            <person name="Jeanpierre E."/>
            <person name="Pontarotti P."/>
            <person name="Monget P."/>
        </authorList>
    </citation>
    <scope>IDENTIFICATION</scope>
</reference>
<reference key="4">
    <citation type="journal article" date="2015" name="Genome Biol.">
        <title>TLE6 mutation causes the earliest known human embryonic lethality.</title>
        <authorList>
            <person name="Alazami A.M."/>
            <person name="Awad S.M."/>
            <person name="Coskun S."/>
            <person name="Al-Hassan S."/>
            <person name="Hijazi H."/>
            <person name="Abdulwahab F.M."/>
            <person name="Poizat C."/>
            <person name="Alkuraya F.S."/>
        </authorList>
    </citation>
    <scope>INTERACTION WITH TLE6</scope>
</reference>
<reference key="5">
    <citation type="journal article" date="2015" name="Mol. Hum. Reprod.">
        <title>Identification of a human subcortical maternal complex.</title>
        <authorList>
            <person name="Zhu K."/>
            <person name="Yan L."/>
            <person name="Zhang X."/>
            <person name="Lu X."/>
            <person name="Wang T."/>
            <person name="Yan J."/>
            <person name="Liu X."/>
            <person name="Qiao J."/>
            <person name="Li L."/>
        </authorList>
    </citation>
    <scope>IDENTIFICATION IN THE SCMC COMPLEX</scope>
    <scope>SUBCELLULAR LOCATION</scope>
    <scope>DEVELOPMENTAL STAGE</scope>
</reference>
<reference evidence="12 13" key="6">
    <citation type="journal article" date="2024" name="Nat. Struct. Mol. Biol.">
        <title>Cryo-EM structure of the human subcortical maternal complex and the associated discovery of infertility-associated variants.</title>
        <authorList>
            <person name="Chi P."/>
            <person name="Ou G."/>
            <person name="Liu S."/>
            <person name="Ma Q."/>
            <person name="Lu Y."/>
            <person name="Li J."/>
            <person name="Li J."/>
            <person name="Qi Q."/>
            <person name="Han Z."/>
            <person name="Zhang Z."/>
            <person name="Liu Q."/>
            <person name="Guo L."/>
            <person name="Chen J."/>
            <person name="Wang X."/>
            <person name="Huang W."/>
            <person name="Li L."/>
            <person name="Deng D."/>
        </authorList>
    </citation>
    <scope>STRUCTURE BY ELECTRON MICROSCOPY (3.01 ANGSTROMS) IN COMPLEX WITH NLRP5 AND TLE6</scope>
    <scope>IDENTIFICATION IN THE SCMC COMPLEX</scope>
    <scope>MUTAGENESIS OF 109-MET--PHE-116</scope>
</reference>
<reference key="7">
    <citation type="journal article" date="2022" name="Hum. Mutat.">
        <title>Mutations in OOEP and NLRP5 identified in infertile patients with early embryonic arrest.</title>
        <authorList>
            <person name="Tong X."/>
            <person name="Jin J."/>
            <person name="Hu Z."/>
            <person name="Zhang Y."/>
            <person name="Fan H.Y."/>
            <person name="Zhang Y.L."/>
            <person name="Zhang S."/>
        </authorList>
    </citation>
    <scope>VARIANTS GLY-37 AND PRO-37</scope>
</reference>
<comment type="function">
    <text evidence="1">Component of the subcortical maternal complex (SCMC), a multiprotein complex that plays a key role in early embryonic development. The SCMC complex is a structural constituent of cytoplasmic lattices, which consist in fibrous structures found in the cytoplasm of oocytes and preimplantation embryos. They are required to store maternal proteins critical for embryonic development, such as proteins that control epigenetic reprogramming of the preimplantation embryo, and prevent their degradation or activation. As part of the OOEP-KHDC3 scaffold, recruits BLM and TRIM25 to DNA replication forks, thereby promoting the ubiquitination of BLM by TRIM25, enhancing BLM retainment at replication forks and therefore promoting stalled replication fork restart. Positively regulates the homologous recombination-mediated DNA double-strand break (DSB) repair pathway by regulating ATM activation and RAD51 recruitment to DSBs in oocytes. Thereby contributes to oocyte survival and the resumption and completion of meiosis.</text>
</comment>
<comment type="subunit">
    <text evidence="1 3 4 6">Component of the subcortical maternal complex (SCMC), at least composed of NLRP5, KHDC3L, OOEP, and TLE6 isoform 1 (PubMed:25542835, PubMed:26537248, PubMed:39379527). Within the complex, interacts with NLRP5, KHDC3L and TLE6 isoform 1 (PubMed:25542835, PubMed:26537248). As part of the SCMC interacts with the SCMC-associated protein NLRP4F (By similarity). The SCMC may facilitate translocation of its components between the nuclear and cytoplasmic compartments (PubMed:25542835). Forms a scaffold complex with KHDC3L/FILIA, and interacts with BLM and TRIM25 at DNA replication forks (By similarity).</text>
</comment>
<comment type="interaction">
    <interactant intactId="EBI-18583589">
        <id>A6NGQ2</id>
    </interactant>
    <interactant intactId="EBI-11096309">
        <id>Q9NYB9-2</id>
        <label>ABI2</label>
    </interactant>
    <organismsDiffer>false</organismsDiffer>
    <experiments>3</experiments>
</comment>
<comment type="interaction">
    <interactant intactId="EBI-18583589">
        <id>A6NGQ2</id>
    </interactant>
    <interactant intactId="EBI-8643161">
        <id>Q9NX04</id>
        <label>AIRIM</label>
    </interactant>
    <organismsDiffer>false</organismsDiffer>
    <experiments>3</experiments>
</comment>
<comment type="interaction">
    <interactant intactId="EBI-18583589">
        <id>A6NGQ2</id>
    </interactant>
    <interactant intactId="EBI-79934">
        <id>P09917</id>
        <label>ALOX5</label>
    </interactant>
    <organismsDiffer>false</organismsDiffer>
    <experiments>3</experiments>
</comment>
<comment type="interaction">
    <interactant intactId="EBI-18583589">
        <id>A6NGQ2</id>
    </interactant>
    <interactant intactId="EBI-744099">
        <id>Q9H0I2</id>
        <label>ENKD1</label>
    </interactant>
    <organismsDiffer>false</organismsDiffer>
    <experiments>3</experiments>
</comment>
<comment type="interaction">
    <interactant intactId="EBI-18583589">
        <id>A6NGQ2</id>
    </interactant>
    <interactant intactId="EBI-22731520">
        <id>Q587J8</id>
        <label>KHDC3L</label>
    </interactant>
    <organismsDiffer>false</organismsDiffer>
    <experiments>3</experiments>
</comment>
<comment type="interaction">
    <interactant intactId="EBI-18583589">
        <id>A6NGQ2</id>
    </interactant>
    <interactant intactId="EBI-8472129">
        <id>Q9HAQ2</id>
        <label>KIF9</label>
    </interactant>
    <organismsDiffer>false</organismsDiffer>
    <experiments>3</experiments>
</comment>
<comment type="interaction">
    <interactant intactId="EBI-18583589">
        <id>A6NGQ2</id>
    </interactant>
    <interactant intactId="EBI-2341787">
        <id>Q17RB8</id>
        <label>LONRF1</label>
    </interactant>
    <organismsDiffer>false</organismsDiffer>
    <experiments>3</experiments>
</comment>
<comment type="interaction">
    <interactant intactId="EBI-18583589">
        <id>A6NGQ2</id>
    </interactant>
    <interactant intactId="EBI-11071382">
        <id>P59047</id>
        <label>NLRP5</label>
    </interactant>
    <organismsDiffer>false</organismsDiffer>
    <experiments>2</experiments>
</comment>
<comment type="interaction">
    <interactant intactId="EBI-18583589">
        <id>A6NGQ2</id>
    </interactant>
    <interactant intactId="EBI-741158">
        <id>Q96HA8</id>
        <label>NTAQ1</label>
    </interactant>
    <organismsDiffer>false</organismsDiffer>
    <experiments>3</experiments>
</comment>
<comment type="interaction">
    <interactant intactId="EBI-18583589">
        <id>A6NGQ2</id>
    </interactant>
    <interactant intactId="EBI-372475">
        <id>P14678-2</id>
        <label>SNRPB</label>
    </interactant>
    <organismsDiffer>false</organismsDiffer>
    <experiments>3</experiments>
</comment>
<comment type="interaction">
    <interactant intactId="EBI-18583589">
        <id>A6NGQ2</id>
    </interactant>
    <interactant intactId="EBI-11955057">
        <id>Q8N8B7-2</id>
        <label>TCEANC</label>
    </interactant>
    <organismsDiffer>false</organismsDiffer>
    <experiments>3</experiments>
</comment>
<comment type="interaction">
    <interactant intactId="EBI-18583589">
        <id>A6NGQ2</id>
    </interactant>
    <interactant intactId="EBI-32711753">
        <id>Q9H808-1</id>
        <label>TLE6</label>
    </interactant>
    <organismsDiffer>false</organismsDiffer>
    <experiments>2</experiments>
</comment>
<comment type="subcellular location">
    <subcellularLocation>
        <location evidence="3">Cytoplasm</location>
    </subcellularLocation>
    <subcellularLocation>
        <location evidence="3">Nucleus</location>
    </subcellularLocation>
    <text evidence="1">Core component of cytoplasmic lattices in oocytes. In the subcortical cytoplasm of early embryos from the 1-cell to the blastocyst stages. From the 2-cell stage, still detected in the subcortex, but excluded from cell-cell contact regions. Expression largely disappears in blastocysts.</text>
</comment>
<comment type="developmental stage">
    <text evidence="3">Expressed in oocytes of the fetal ovary (PubMed:25542835). Expressed primarily with other SCMC components in the subcortex of oocytes and early embryos (PubMed:25542835). Expression is excluded from cell-cell contact regions after the 2-cell stage (PubMed:25542835).</text>
</comment>
<comment type="domain">
    <text>Contains an atypical KH domain with amino acid changes at critical sites, suggesting that it may not bind RNA.</text>
</comment>
<comment type="similarity">
    <text evidence="10">Belongs to the KHDC1 family.</text>
</comment>
<keyword id="KW-0002">3D-structure</keyword>
<keyword id="KW-0963">Cytoplasm</keyword>
<keyword id="KW-0539">Nucleus</keyword>
<keyword id="KW-1267">Proteomics identification</keyword>
<keyword id="KW-1185">Reference proteome</keyword>